<organism>
    <name type="scientific">Sinorhizobium fredii (strain NBRC 101917 / NGR234)</name>
    <dbReference type="NCBI Taxonomy" id="394"/>
    <lineage>
        <taxon>Bacteria</taxon>
        <taxon>Pseudomonadati</taxon>
        <taxon>Pseudomonadota</taxon>
        <taxon>Alphaproteobacteria</taxon>
        <taxon>Hyphomicrobiales</taxon>
        <taxon>Rhizobiaceae</taxon>
        <taxon>Sinorhizobium/Ensifer group</taxon>
        <taxon>Sinorhizobium</taxon>
    </lineage>
</organism>
<accession>P55727</accession>
<proteinExistence type="predicted"/>
<sequence length="182" mass="20117">MNSHENRVAAPLLSFRLSLVLFAVLSVLPLGGCARWDNPVLSVKETSAAQLLGANQINAATRQRILRAVGEDAQERALRDDLKQHPGNVDAAIRLTKALVAQKRPHEALQVLDNVLVVTPDNLRALNAKAVILDIEGRHDAAQELYRQALETNPENQMLHHNLHLSLAFEGKSEQRTLPQSR</sequence>
<dbReference type="EMBL" id="U00090">
    <property type="protein sequence ID" value="AAB91958.1"/>
    <property type="molecule type" value="Genomic_DNA"/>
</dbReference>
<dbReference type="RefSeq" id="NP_444171.1">
    <property type="nucleotide sequence ID" value="NC_000914.2"/>
</dbReference>
<dbReference type="RefSeq" id="WP_010875093.1">
    <property type="nucleotide sequence ID" value="NC_000914.2"/>
</dbReference>
<dbReference type="SMR" id="P55727"/>
<dbReference type="KEGG" id="rhi:NGR_a00520"/>
<dbReference type="eggNOG" id="COG5010">
    <property type="taxonomic scope" value="Bacteria"/>
</dbReference>
<dbReference type="HOGENOM" id="CLU_127116_0_0_5"/>
<dbReference type="OrthoDB" id="7817412at2"/>
<dbReference type="Proteomes" id="UP000001054">
    <property type="component" value="Plasmid pNGR234a"/>
</dbReference>
<dbReference type="GO" id="GO:0016020">
    <property type="term" value="C:membrane"/>
    <property type="evidence" value="ECO:0007669"/>
    <property type="project" value="UniProtKB-SubCell"/>
</dbReference>
<dbReference type="Gene3D" id="1.25.40.10">
    <property type="entry name" value="Tetratricopeptide repeat domain"/>
    <property type="match status" value="1"/>
</dbReference>
<dbReference type="InterPro" id="IPR011990">
    <property type="entry name" value="TPR-like_helical_dom_sf"/>
</dbReference>
<dbReference type="InterPro" id="IPR019734">
    <property type="entry name" value="TPR_rpt"/>
</dbReference>
<dbReference type="InterPro" id="IPR051685">
    <property type="entry name" value="Ycf3/AcsC/BcsC/TPR_MFPF"/>
</dbReference>
<dbReference type="PANTHER" id="PTHR44943">
    <property type="entry name" value="CELLULOSE SYNTHASE OPERON PROTEIN C"/>
    <property type="match status" value="1"/>
</dbReference>
<dbReference type="PANTHER" id="PTHR44943:SF4">
    <property type="entry name" value="TPR REPEAT-CONTAINING PROTEIN MJ0798"/>
    <property type="match status" value="1"/>
</dbReference>
<dbReference type="Pfam" id="PF14559">
    <property type="entry name" value="TPR_19"/>
    <property type="match status" value="1"/>
</dbReference>
<dbReference type="SMART" id="SM00028">
    <property type="entry name" value="TPR"/>
    <property type="match status" value="2"/>
</dbReference>
<dbReference type="SUPFAM" id="SSF48452">
    <property type="entry name" value="TPR-like"/>
    <property type="match status" value="1"/>
</dbReference>
<dbReference type="PROSITE" id="PS50005">
    <property type="entry name" value="TPR"/>
    <property type="match status" value="2"/>
</dbReference>
<dbReference type="PROSITE" id="PS50293">
    <property type="entry name" value="TPR_REGION"/>
    <property type="match status" value="1"/>
</dbReference>
<keyword id="KW-0472">Membrane</keyword>
<keyword id="KW-0614">Plasmid</keyword>
<keyword id="KW-1185">Reference proteome</keyword>
<keyword id="KW-0677">Repeat</keyword>
<keyword id="KW-0802">TPR repeat</keyword>
<keyword id="KW-0812">Transmembrane</keyword>
<keyword id="KW-1133">Transmembrane helix</keyword>
<reference key="1">
    <citation type="journal article" date="1997" name="Nature">
        <title>Molecular basis of symbiosis between Rhizobium and legumes.</title>
        <authorList>
            <person name="Freiberg C.A."/>
            <person name="Fellay R."/>
            <person name="Bairoch A."/>
            <person name="Broughton W.J."/>
            <person name="Rosenthal A."/>
            <person name="Perret X."/>
        </authorList>
    </citation>
    <scope>NUCLEOTIDE SEQUENCE [LARGE SCALE GENOMIC DNA]</scope>
    <source>
        <strain>NBRC 101917 / NGR234</strain>
    </source>
</reference>
<reference key="2">
    <citation type="journal article" date="2009" name="Appl. Environ. Microbiol.">
        <title>Rhizobium sp. strain NGR234 possesses a remarkable number of secretion systems.</title>
        <authorList>
            <person name="Schmeisser C."/>
            <person name="Liesegang H."/>
            <person name="Krysciak D."/>
            <person name="Bakkou N."/>
            <person name="Le Quere A."/>
            <person name="Wollherr A."/>
            <person name="Heinemeyer I."/>
            <person name="Morgenstern B."/>
            <person name="Pommerening-Roeser A."/>
            <person name="Flores M."/>
            <person name="Palacios R."/>
            <person name="Brenner S."/>
            <person name="Gottschalk G."/>
            <person name="Schmitz R.A."/>
            <person name="Broughton W.J."/>
            <person name="Perret X."/>
            <person name="Strittmatter A.W."/>
            <person name="Streit W.R."/>
        </authorList>
    </citation>
    <scope>NUCLEOTIDE SEQUENCE [LARGE SCALE GENOMIC DNA]</scope>
    <source>
        <strain>NBRC 101917 / NGR234</strain>
    </source>
</reference>
<geneLocation type="plasmid">
    <name>sym pNGR234a</name>
</geneLocation>
<gene>
    <name type="ordered locus">NGR_a00520</name>
    <name type="ORF">y4yS</name>
</gene>
<name>Y4YS_SINFN</name>
<evidence type="ECO:0000255" key="1"/>
<evidence type="ECO:0000305" key="2"/>
<feature type="chain" id="PRO_0000200975" description="Uncharacterized protein y4yS">
    <location>
        <begin position="1"/>
        <end position="182"/>
    </location>
</feature>
<feature type="transmembrane region" description="Helical" evidence="1">
    <location>
        <begin position="17"/>
        <end position="34"/>
    </location>
</feature>
<feature type="repeat" description="TPR 1">
    <location>
        <begin position="89"/>
        <end position="122"/>
    </location>
</feature>
<feature type="repeat" description="TPR 2">
    <location>
        <begin position="123"/>
        <end position="156"/>
    </location>
</feature>
<comment type="subcellular location">
    <subcellularLocation>
        <location evidence="2">Membrane</location>
        <topology evidence="2">Single-pass membrane protein</topology>
    </subcellularLocation>
</comment>
<protein>
    <recommendedName>
        <fullName>Uncharacterized protein y4yS</fullName>
    </recommendedName>
</protein>